<dbReference type="PIR" id="C49195">
    <property type="entry name" value="C49195"/>
</dbReference>
<dbReference type="SMR" id="P07468"/>
<dbReference type="PaxDb" id="9986-ENSOCUP00000012525"/>
<dbReference type="InParanoid" id="P07468"/>
<dbReference type="Proteomes" id="UP000001811">
    <property type="component" value="Unplaced"/>
</dbReference>
<dbReference type="GO" id="GO:0005576">
    <property type="term" value="C:extracellular region"/>
    <property type="evidence" value="ECO:0007669"/>
    <property type="project" value="UniProtKB-SubCell"/>
</dbReference>
<dbReference type="GO" id="GO:0042742">
    <property type="term" value="P:defense response to bacterium"/>
    <property type="evidence" value="ECO:0007669"/>
    <property type="project" value="UniProtKB-KW"/>
</dbReference>
<dbReference type="InterPro" id="IPR006081">
    <property type="entry name" value="Alpha-defensin_C"/>
</dbReference>
<dbReference type="InterPro" id="IPR006080">
    <property type="entry name" value="Beta/alpha-defensin_C"/>
</dbReference>
<dbReference type="Pfam" id="PF00323">
    <property type="entry name" value="Defensin_1"/>
    <property type="match status" value="1"/>
</dbReference>
<dbReference type="SMART" id="SM00048">
    <property type="entry name" value="DEFSN"/>
    <property type="match status" value="1"/>
</dbReference>
<dbReference type="PROSITE" id="PS00269">
    <property type="entry name" value="DEFENSIN"/>
    <property type="match status" value="1"/>
</dbReference>
<accession>P07468</accession>
<comment type="function">
    <text>Microbicidal activity and inhibits corticotropin (ACTH) stimulated corticosterone production.</text>
</comment>
<comment type="subcellular location">
    <subcellularLocation>
        <location>Secreted</location>
    </subcellularLocation>
</comment>
<comment type="similarity">
    <text evidence="2">Belongs to the alpha-defensin family.</text>
</comment>
<reference key="1">
    <citation type="journal article" date="1985" name="J. Biol. Chem.">
        <title>Primary structures of six antimicrobial peptides of rabbit peritoneal neutrophils.</title>
        <authorList>
            <person name="Selsted M.E."/>
            <person name="Brown D.M."/>
            <person name="Delange R.J."/>
            <person name="Harwig S.S.L."/>
            <person name="Lehrer R.I."/>
        </authorList>
    </citation>
    <scope>PROTEIN SEQUENCE</scope>
    <source>
        <tissue>Peritoneal neutrophil</tissue>
    </source>
</reference>
<reference key="2">
    <citation type="journal article" date="1992" name="Endocrinology">
        <title>Isolation and mode of action of rabbit corticostatic (antiadrenocorticotropin) peptides.</title>
        <authorList>
            <person name="Zhu Q."/>
            <person name="Solomon S."/>
        </authorList>
    </citation>
    <scope>PROTEIN SEQUENCE</scope>
    <source>
        <tissue>Lung</tissue>
    </source>
</reference>
<evidence type="ECO:0000250" key="1"/>
<evidence type="ECO:0000305" key="2"/>
<sequence>GRCVCRKQLLCSYRERRIGDCKIRGVRFPFCCPR</sequence>
<name>DEF2_RABIT</name>
<feature type="peptide" id="PRO_0000044718" description="Corticostatin-2">
    <location>
        <begin position="1"/>
        <end position="34"/>
    </location>
</feature>
<feature type="disulfide bond" evidence="1">
    <location>
        <begin position="3"/>
        <end position="32"/>
    </location>
</feature>
<feature type="disulfide bond" evidence="1">
    <location>
        <begin position="5"/>
        <end position="21"/>
    </location>
</feature>
<feature type="disulfide bond" evidence="1">
    <location>
        <begin position="11"/>
        <end position="31"/>
    </location>
</feature>
<organism>
    <name type="scientific">Oryctolagus cuniculus</name>
    <name type="common">Rabbit</name>
    <dbReference type="NCBI Taxonomy" id="9986"/>
    <lineage>
        <taxon>Eukaryota</taxon>
        <taxon>Metazoa</taxon>
        <taxon>Chordata</taxon>
        <taxon>Craniata</taxon>
        <taxon>Vertebrata</taxon>
        <taxon>Euteleostomi</taxon>
        <taxon>Mammalia</taxon>
        <taxon>Eutheria</taxon>
        <taxon>Euarchontoglires</taxon>
        <taxon>Glires</taxon>
        <taxon>Lagomorpha</taxon>
        <taxon>Leporidae</taxon>
        <taxon>Oryctolagus</taxon>
    </lineage>
</organism>
<protein>
    <recommendedName>
        <fullName>Corticostatin-2</fullName>
    </recommendedName>
    <alternativeName>
        <fullName>Antiadrenocorticotropin peptide II</fullName>
    </alternativeName>
    <alternativeName>
        <fullName>Corticostatin II</fullName>
        <shortName>CS-II</shortName>
    </alternativeName>
    <alternativeName>
        <fullName>Microbicidal peptide NP-3B</fullName>
    </alternativeName>
    <alternativeName>
        <fullName>Neutrophil antibiotic peptide NP-3B</fullName>
    </alternativeName>
</protein>
<keyword id="KW-0044">Antibiotic</keyword>
<keyword id="KW-0929">Antimicrobial</keyword>
<keyword id="KW-0211">Defensin</keyword>
<keyword id="KW-0903">Direct protein sequencing</keyword>
<keyword id="KW-1015">Disulfide bond</keyword>
<keyword id="KW-1185">Reference proteome</keyword>
<keyword id="KW-0964">Secreted</keyword>
<proteinExistence type="evidence at protein level"/>